<organism>
    <name type="scientific">Geobacter sp. (strain M21)</name>
    <dbReference type="NCBI Taxonomy" id="443144"/>
    <lineage>
        <taxon>Bacteria</taxon>
        <taxon>Pseudomonadati</taxon>
        <taxon>Thermodesulfobacteriota</taxon>
        <taxon>Desulfuromonadia</taxon>
        <taxon>Geobacterales</taxon>
        <taxon>Geobacteraceae</taxon>
        <taxon>Geobacter</taxon>
    </lineage>
</organism>
<dbReference type="EC" id="5.3.1.9" evidence="1"/>
<dbReference type="EMBL" id="CP001661">
    <property type="protein sequence ID" value="ACT19501.1"/>
    <property type="molecule type" value="Genomic_DNA"/>
</dbReference>
<dbReference type="SMR" id="C6E5H7"/>
<dbReference type="STRING" id="443144.GM21_3479"/>
<dbReference type="KEGG" id="gem:GM21_3479"/>
<dbReference type="eggNOG" id="COG0166">
    <property type="taxonomic scope" value="Bacteria"/>
</dbReference>
<dbReference type="HOGENOM" id="CLU_033288_0_0_7"/>
<dbReference type="OrthoDB" id="140919at2"/>
<dbReference type="UniPathway" id="UPA00109">
    <property type="reaction ID" value="UER00181"/>
</dbReference>
<dbReference type="UniPathway" id="UPA00138"/>
<dbReference type="GO" id="GO:0005829">
    <property type="term" value="C:cytosol"/>
    <property type="evidence" value="ECO:0007669"/>
    <property type="project" value="TreeGrafter"/>
</dbReference>
<dbReference type="GO" id="GO:0097367">
    <property type="term" value="F:carbohydrate derivative binding"/>
    <property type="evidence" value="ECO:0007669"/>
    <property type="project" value="InterPro"/>
</dbReference>
<dbReference type="GO" id="GO:0004347">
    <property type="term" value="F:glucose-6-phosphate isomerase activity"/>
    <property type="evidence" value="ECO:0007669"/>
    <property type="project" value="UniProtKB-UniRule"/>
</dbReference>
<dbReference type="GO" id="GO:0048029">
    <property type="term" value="F:monosaccharide binding"/>
    <property type="evidence" value="ECO:0007669"/>
    <property type="project" value="TreeGrafter"/>
</dbReference>
<dbReference type="GO" id="GO:0006094">
    <property type="term" value="P:gluconeogenesis"/>
    <property type="evidence" value="ECO:0007669"/>
    <property type="project" value="UniProtKB-UniRule"/>
</dbReference>
<dbReference type="GO" id="GO:0051156">
    <property type="term" value="P:glucose 6-phosphate metabolic process"/>
    <property type="evidence" value="ECO:0007669"/>
    <property type="project" value="TreeGrafter"/>
</dbReference>
<dbReference type="GO" id="GO:0006096">
    <property type="term" value="P:glycolytic process"/>
    <property type="evidence" value="ECO:0007669"/>
    <property type="project" value="UniProtKB-UniRule"/>
</dbReference>
<dbReference type="CDD" id="cd05015">
    <property type="entry name" value="SIS_PGI_1"/>
    <property type="match status" value="1"/>
</dbReference>
<dbReference type="CDD" id="cd05016">
    <property type="entry name" value="SIS_PGI_2"/>
    <property type="match status" value="1"/>
</dbReference>
<dbReference type="FunFam" id="3.40.50.10490:FF:000021">
    <property type="entry name" value="Glucose-6-phosphate isomerase"/>
    <property type="match status" value="1"/>
</dbReference>
<dbReference type="FunFam" id="3.40.50.10490:FF:000023">
    <property type="entry name" value="Glucose-6-phosphate isomerase"/>
    <property type="match status" value="1"/>
</dbReference>
<dbReference type="Gene3D" id="3.40.50.10490">
    <property type="entry name" value="Glucose-6-phosphate isomerase like protein, domain 1"/>
    <property type="match status" value="3"/>
</dbReference>
<dbReference type="HAMAP" id="MF_00473">
    <property type="entry name" value="G6P_isomerase"/>
    <property type="match status" value="1"/>
</dbReference>
<dbReference type="InterPro" id="IPR001672">
    <property type="entry name" value="G6P_Isomerase"/>
</dbReference>
<dbReference type="InterPro" id="IPR018189">
    <property type="entry name" value="Phosphoglucose_isomerase_CS"/>
</dbReference>
<dbReference type="InterPro" id="IPR046348">
    <property type="entry name" value="SIS_dom_sf"/>
</dbReference>
<dbReference type="InterPro" id="IPR035476">
    <property type="entry name" value="SIS_PGI_1"/>
</dbReference>
<dbReference type="InterPro" id="IPR035482">
    <property type="entry name" value="SIS_PGI_2"/>
</dbReference>
<dbReference type="NCBIfam" id="NF010696">
    <property type="entry name" value="PRK14096.1"/>
    <property type="match status" value="1"/>
</dbReference>
<dbReference type="PANTHER" id="PTHR11469">
    <property type="entry name" value="GLUCOSE-6-PHOSPHATE ISOMERASE"/>
    <property type="match status" value="1"/>
</dbReference>
<dbReference type="PANTHER" id="PTHR11469:SF1">
    <property type="entry name" value="GLUCOSE-6-PHOSPHATE ISOMERASE"/>
    <property type="match status" value="1"/>
</dbReference>
<dbReference type="Pfam" id="PF00342">
    <property type="entry name" value="PGI"/>
    <property type="match status" value="1"/>
</dbReference>
<dbReference type="PRINTS" id="PR00662">
    <property type="entry name" value="G6PISOMERASE"/>
</dbReference>
<dbReference type="SUPFAM" id="SSF53697">
    <property type="entry name" value="SIS domain"/>
    <property type="match status" value="1"/>
</dbReference>
<dbReference type="PROSITE" id="PS00174">
    <property type="entry name" value="P_GLUCOSE_ISOMERASE_2"/>
    <property type="match status" value="1"/>
</dbReference>
<dbReference type="PROSITE" id="PS51463">
    <property type="entry name" value="P_GLUCOSE_ISOMERASE_3"/>
    <property type="match status" value="1"/>
</dbReference>
<comment type="function">
    <text evidence="1">Catalyzes the reversible isomerization of glucose-6-phosphate to fructose-6-phosphate.</text>
</comment>
<comment type="catalytic activity">
    <reaction evidence="1">
        <text>alpha-D-glucose 6-phosphate = beta-D-fructose 6-phosphate</text>
        <dbReference type="Rhea" id="RHEA:11816"/>
        <dbReference type="ChEBI" id="CHEBI:57634"/>
        <dbReference type="ChEBI" id="CHEBI:58225"/>
        <dbReference type="EC" id="5.3.1.9"/>
    </reaction>
</comment>
<comment type="pathway">
    <text evidence="1">Carbohydrate biosynthesis; gluconeogenesis.</text>
</comment>
<comment type="pathway">
    <text evidence="1">Carbohydrate degradation; glycolysis; D-glyceraldehyde 3-phosphate and glycerone phosphate from D-glucose: step 2/4.</text>
</comment>
<comment type="subcellular location">
    <subcellularLocation>
        <location evidence="1">Cytoplasm</location>
    </subcellularLocation>
</comment>
<comment type="similarity">
    <text evidence="1">Belongs to the GPI family.</text>
</comment>
<feature type="chain" id="PRO_1000206366" description="Glucose-6-phosphate isomerase">
    <location>
        <begin position="1"/>
        <end position="530"/>
    </location>
</feature>
<feature type="active site" description="Proton donor" evidence="1">
    <location>
        <position position="322"/>
    </location>
</feature>
<feature type="active site" evidence="1">
    <location>
        <position position="351"/>
    </location>
</feature>
<feature type="active site" evidence="1">
    <location>
        <position position="455"/>
    </location>
</feature>
<protein>
    <recommendedName>
        <fullName evidence="1">Glucose-6-phosphate isomerase</fullName>
        <shortName evidence="1">GPI</shortName>
        <ecNumber evidence="1">5.3.1.9</ecNumber>
    </recommendedName>
    <alternativeName>
        <fullName evidence="1">Phosphoglucose isomerase</fullName>
        <shortName evidence="1">PGI</shortName>
    </alternativeName>
    <alternativeName>
        <fullName evidence="1">Phosphohexose isomerase</fullName>
        <shortName evidence="1">PHI</shortName>
    </alternativeName>
</protein>
<reference key="1">
    <citation type="submission" date="2009-07" db="EMBL/GenBank/DDBJ databases">
        <title>Complete sequence of Geobacter sp. M21.</title>
        <authorList>
            <consortium name="US DOE Joint Genome Institute"/>
            <person name="Lucas S."/>
            <person name="Copeland A."/>
            <person name="Lapidus A."/>
            <person name="Glavina del Rio T."/>
            <person name="Dalin E."/>
            <person name="Tice H."/>
            <person name="Bruce D."/>
            <person name="Goodwin L."/>
            <person name="Pitluck S."/>
            <person name="Saunders E."/>
            <person name="Brettin T."/>
            <person name="Detter J.C."/>
            <person name="Han C."/>
            <person name="Larimer F."/>
            <person name="Land M."/>
            <person name="Hauser L."/>
            <person name="Kyrpides N."/>
            <person name="Ovchinnikova G."/>
            <person name="Lovley D."/>
        </authorList>
    </citation>
    <scope>NUCLEOTIDE SEQUENCE [LARGE SCALE GENOMIC DNA]</scope>
    <source>
        <strain>M21</strain>
    </source>
</reference>
<accession>C6E5H7</accession>
<evidence type="ECO:0000255" key="1">
    <source>
        <dbReference type="HAMAP-Rule" id="MF_00473"/>
    </source>
</evidence>
<sequence>MQKKQLWERYKNLLYHDAELELSVDTSRIDFPEGFLEEMEPRLQQAYQEMEALEKGAVANPDENRMVGHYWLRAPEQAPEAALSEEITSTLAAIKAFASSVHGGNIAAPDGHRFTDLLIIGIGGSALGPQFVADSLGGPGDRLRIWFFDNTDPDGMDKVLSRIGTALKQTLVVVISKSGGTKETRNGMLEARRAFERAGLHFAAHAVAVTGSGSELDGTASWESWLGVFPMWDWVGGRTSVTSAVGLLPAALQGIDVERLLAGARACDQKTRSRVTRENPAALLALSWFHATRGKGARDMVLLPYKDRLLLFSRYLQQLIMESLGKELDRDGNRVLQGIAVYGNKGSTDQHAYVQQLREGVHNFFVTFIEVLKDREGPSLEVEPGATSGDYLSGFFQGTRAALYEKGRESVTITVRELSPVSIGALIALYERAVGLYASLVNVNAYHQPGVEAGKKAAGAVLKLQGEIVEMLRRQPNREFTGEEMALALARPEEVETVFMILRHLAANGDHGVSVTVKDKIWENKYRSKG</sequence>
<name>G6PI_GEOSM</name>
<gene>
    <name evidence="1" type="primary">pgi</name>
    <name type="ordered locus">GM21_3479</name>
</gene>
<keyword id="KW-0963">Cytoplasm</keyword>
<keyword id="KW-0312">Gluconeogenesis</keyword>
<keyword id="KW-0324">Glycolysis</keyword>
<keyword id="KW-0413">Isomerase</keyword>
<proteinExistence type="inferred from homology"/>